<reference key="1">
    <citation type="journal article" date="1997" name="DNA Res.">
        <title>Structural analysis of Arabidopsis thaliana chromosome 5. I. Sequence features of the 1.6 Mb regions covered by twenty physically assigned P1 clones.</title>
        <authorList>
            <person name="Sato S."/>
            <person name="Kotani H."/>
            <person name="Nakamura Y."/>
            <person name="Kaneko T."/>
            <person name="Asamizu E."/>
            <person name="Fukami M."/>
            <person name="Miyajima N."/>
            <person name="Tabata S."/>
        </authorList>
    </citation>
    <scope>NUCLEOTIDE SEQUENCE [LARGE SCALE GENOMIC DNA]</scope>
    <source>
        <strain>cv. Columbia</strain>
    </source>
</reference>
<reference key="2">
    <citation type="journal article" date="2017" name="Plant J.">
        <title>Araport11: a complete reannotation of the Arabidopsis thaliana reference genome.</title>
        <authorList>
            <person name="Cheng C.Y."/>
            <person name="Krishnakumar V."/>
            <person name="Chan A.P."/>
            <person name="Thibaud-Nissen F."/>
            <person name="Schobel S."/>
            <person name="Town C.D."/>
        </authorList>
    </citation>
    <scope>GENOME REANNOTATION</scope>
    <source>
        <strain>cv. Columbia</strain>
    </source>
</reference>
<reference key="3">
    <citation type="journal article" date="2003" name="Science">
        <title>Empirical analysis of transcriptional activity in the Arabidopsis genome.</title>
        <authorList>
            <person name="Yamada K."/>
            <person name="Lim J."/>
            <person name="Dale J.M."/>
            <person name="Chen H."/>
            <person name="Shinn P."/>
            <person name="Palm C.J."/>
            <person name="Southwick A.M."/>
            <person name="Wu H.C."/>
            <person name="Kim C.J."/>
            <person name="Nguyen M."/>
            <person name="Pham P.K."/>
            <person name="Cheuk R.F."/>
            <person name="Karlin-Newmann G."/>
            <person name="Liu S.X."/>
            <person name="Lam B."/>
            <person name="Sakano H."/>
            <person name="Wu T."/>
            <person name="Yu G."/>
            <person name="Miranda M."/>
            <person name="Quach H.L."/>
            <person name="Tripp M."/>
            <person name="Chang C.H."/>
            <person name="Lee J.M."/>
            <person name="Toriumi M.J."/>
            <person name="Chan M.M."/>
            <person name="Tang C.C."/>
            <person name="Onodera C.S."/>
            <person name="Deng J.M."/>
            <person name="Akiyama K."/>
            <person name="Ansari Y."/>
            <person name="Arakawa T."/>
            <person name="Banh J."/>
            <person name="Banno F."/>
            <person name="Bowser L."/>
            <person name="Brooks S.Y."/>
            <person name="Carninci P."/>
            <person name="Chao Q."/>
            <person name="Choy N."/>
            <person name="Enju A."/>
            <person name="Goldsmith A.D."/>
            <person name="Gurjal M."/>
            <person name="Hansen N.F."/>
            <person name="Hayashizaki Y."/>
            <person name="Johnson-Hopson C."/>
            <person name="Hsuan V.W."/>
            <person name="Iida K."/>
            <person name="Karnes M."/>
            <person name="Khan S."/>
            <person name="Koesema E."/>
            <person name="Ishida J."/>
            <person name="Jiang P.X."/>
            <person name="Jones T."/>
            <person name="Kawai J."/>
            <person name="Kamiya A."/>
            <person name="Meyers C."/>
            <person name="Nakajima M."/>
            <person name="Narusaka M."/>
            <person name="Seki M."/>
            <person name="Sakurai T."/>
            <person name="Satou M."/>
            <person name="Tamse R."/>
            <person name="Vaysberg M."/>
            <person name="Wallender E.K."/>
            <person name="Wong C."/>
            <person name="Yamamura Y."/>
            <person name="Yuan S."/>
            <person name="Shinozaki K."/>
            <person name="Davis R.W."/>
            <person name="Theologis A."/>
            <person name="Ecker J.R."/>
        </authorList>
    </citation>
    <scope>NUCLEOTIDE SEQUENCE [LARGE SCALE MRNA]</scope>
    <source>
        <strain>cv. Columbia</strain>
    </source>
</reference>
<comment type="function">
    <text evidence="2">Liberates mannose from p-nitrophenyl-alpha-D-mannoside in vitro.</text>
</comment>
<comment type="catalytic activity">
    <reaction evidence="2">
        <text>Hydrolysis of terminal, non-reducing alpha-D-mannose residues in alpha-D-mannosides.</text>
        <dbReference type="EC" id="3.2.1.24"/>
    </reaction>
</comment>
<comment type="cofactor">
    <cofactor evidence="3">
        <name>Zn(2+)</name>
        <dbReference type="ChEBI" id="CHEBI:29105"/>
    </cofactor>
    <text evidence="3">Binds 1 zinc ion per subunit.</text>
</comment>
<comment type="subunit">
    <text evidence="3">Homodimer.</text>
</comment>
<comment type="alternative products">
    <event type="alternative splicing"/>
    <isoform>
        <id>Q8LPJ3-1</id>
        <name>1</name>
        <sequence type="displayed"/>
    </isoform>
    <text evidence="6">A number of isoforms are produced. According to EST sequences.</text>
</comment>
<comment type="similarity">
    <text evidence="6">Belongs to the glycosyl hydrolase 38 family.</text>
</comment>
<comment type="sequence caution" evidence="6">
    <conflict type="erroneous gene model prediction">
        <sequence resource="EMBL-CDS" id="BAB11126"/>
    </conflict>
</comment>
<dbReference type="EC" id="3.2.1.24" evidence="6"/>
<dbReference type="EMBL" id="AB005230">
    <property type="protein sequence ID" value="BAB11126.1"/>
    <property type="status" value="ALT_SEQ"/>
    <property type="molecule type" value="Genomic_DNA"/>
</dbReference>
<dbReference type="EMBL" id="CP002688">
    <property type="protein sequence ID" value="AED91968.1"/>
    <property type="molecule type" value="Genomic_DNA"/>
</dbReference>
<dbReference type="EMBL" id="CP002688">
    <property type="protein sequence ID" value="AED91969.1"/>
    <property type="molecule type" value="Genomic_DNA"/>
</dbReference>
<dbReference type="EMBL" id="AY099704">
    <property type="protein sequence ID" value="AAM20555.1"/>
    <property type="molecule type" value="mRNA"/>
</dbReference>
<dbReference type="EMBL" id="BT000301">
    <property type="protein sequence ID" value="AAN15620.1"/>
    <property type="molecule type" value="mRNA"/>
</dbReference>
<dbReference type="RefSeq" id="NP_196902.2">
    <molecule id="Q8LPJ3-1"/>
    <property type="nucleotide sequence ID" value="NM_121401.5"/>
</dbReference>
<dbReference type="RefSeq" id="NP_851037.2">
    <molecule id="Q8LPJ3-1"/>
    <property type="nucleotide sequence ID" value="NM_180706.3"/>
</dbReference>
<dbReference type="SMR" id="Q8LPJ3"/>
<dbReference type="FunCoup" id="Q8LPJ3">
    <property type="interactions" value="882"/>
</dbReference>
<dbReference type="STRING" id="3702.Q8LPJ3"/>
<dbReference type="CAZy" id="GH38">
    <property type="family name" value="Glycoside Hydrolase Family 38"/>
</dbReference>
<dbReference type="GlyGen" id="Q8LPJ3">
    <property type="glycosylation" value="10 sites"/>
</dbReference>
<dbReference type="MetOSite" id="Q8LPJ3"/>
<dbReference type="PaxDb" id="3702-AT5G13980.2"/>
<dbReference type="ProteomicsDB" id="238280">
    <molecule id="Q8LPJ3-1"/>
</dbReference>
<dbReference type="EnsemblPlants" id="AT5G13980.1">
    <molecule id="Q8LPJ3-1"/>
    <property type="protein sequence ID" value="AT5G13980.1"/>
    <property type="gene ID" value="AT5G13980"/>
</dbReference>
<dbReference type="EnsemblPlants" id="AT5G13980.2">
    <molecule id="Q8LPJ3-1"/>
    <property type="protein sequence ID" value="AT5G13980.2"/>
    <property type="gene ID" value="AT5G13980"/>
</dbReference>
<dbReference type="GeneID" id="831246"/>
<dbReference type="Gramene" id="AT5G13980.1">
    <molecule id="Q8LPJ3-1"/>
    <property type="protein sequence ID" value="AT5G13980.1"/>
    <property type="gene ID" value="AT5G13980"/>
</dbReference>
<dbReference type="Gramene" id="AT5G13980.2">
    <molecule id="Q8LPJ3-1"/>
    <property type="protein sequence ID" value="AT5G13980.2"/>
    <property type="gene ID" value="AT5G13980"/>
</dbReference>
<dbReference type="KEGG" id="ath:AT5G13980"/>
<dbReference type="Araport" id="AT5G13980"/>
<dbReference type="TAIR" id="AT5G13980"/>
<dbReference type="eggNOG" id="KOG1959">
    <property type="taxonomic scope" value="Eukaryota"/>
</dbReference>
<dbReference type="InParanoid" id="Q8LPJ3"/>
<dbReference type="OrthoDB" id="2016903at2759"/>
<dbReference type="PhylomeDB" id="Q8LPJ3"/>
<dbReference type="BioCyc" id="ARA:AT5G13980-MONOMER"/>
<dbReference type="PRO" id="PR:Q8LPJ3"/>
<dbReference type="Proteomes" id="UP000006548">
    <property type="component" value="Chromosome 5"/>
</dbReference>
<dbReference type="ExpressionAtlas" id="Q8LPJ3">
    <property type="expression patterns" value="baseline and differential"/>
</dbReference>
<dbReference type="GO" id="GO:0048046">
    <property type="term" value="C:apoplast"/>
    <property type="evidence" value="ECO:0007005"/>
    <property type="project" value="TAIR"/>
</dbReference>
<dbReference type="GO" id="GO:0000325">
    <property type="term" value="C:plant-type vacuole"/>
    <property type="evidence" value="ECO:0007005"/>
    <property type="project" value="TAIR"/>
</dbReference>
<dbReference type="GO" id="GO:0099503">
    <property type="term" value="C:secretory vesicle"/>
    <property type="evidence" value="ECO:0007005"/>
    <property type="project" value="TAIR"/>
</dbReference>
<dbReference type="GO" id="GO:0005773">
    <property type="term" value="C:vacuole"/>
    <property type="evidence" value="ECO:0007005"/>
    <property type="project" value="TAIR"/>
</dbReference>
<dbReference type="GO" id="GO:0004559">
    <property type="term" value="F:alpha-mannosidase activity"/>
    <property type="evidence" value="ECO:0007669"/>
    <property type="project" value="UniProtKB-EC"/>
</dbReference>
<dbReference type="GO" id="GO:0030246">
    <property type="term" value="F:carbohydrate binding"/>
    <property type="evidence" value="ECO:0007669"/>
    <property type="project" value="InterPro"/>
</dbReference>
<dbReference type="GO" id="GO:0046872">
    <property type="term" value="F:metal ion binding"/>
    <property type="evidence" value="ECO:0007669"/>
    <property type="project" value="UniProtKB-KW"/>
</dbReference>
<dbReference type="GO" id="GO:0006013">
    <property type="term" value="P:mannose metabolic process"/>
    <property type="evidence" value="ECO:0007669"/>
    <property type="project" value="InterPro"/>
</dbReference>
<dbReference type="CDD" id="cd10810">
    <property type="entry name" value="GH38N_AMII_LAM_like"/>
    <property type="match status" value="1"/>
</dbReference>
<dbReference type="FunFam" id="1.20.1270.50:FF:000002">
    <property type="entry name" value="Alpha-mannosidase"/>
    <property type="match status" value="1"/>
</dbReference>
<dbReference type="FunFam" id="1.20.1270.50:FF:000003">
    <property type="entry name" value="Alpha-mannosidase"/>
    <property type="match status" value="1"/>
</dbReference>
<dbReference type="FunFam" id="2.60.40.1180:FF:000015">
    <property type="entry name" value="Alpha-mannosidase"/>
    <property type="match status" value="1"/>
</dbReference>
<dbReference type="FunFam" id="2.60.40.1360:FF:000001">
    <property type="entry name" value="Alpha-mannosidase"/>
    <property type="match status" value="1"/>
</dbReference>
<dbReference type="FunFam" id="2.70.98.30:FF:000004">
    <property type="entry name" value="Alpha-mannosidase"/>
    <property type="match status" value="1"/>
</dbReference>
<dbReference type="FunFam" id="3.20.110.10:FF:000001">
    <property type="entry name" value="Alpha-mannosidase"/>
    <property type="match status" value="1"/>
</dbReference>
<dbReference type="Gene3D" id="2.60.40.1360">
    <property type="match status" value="1"/>
</dbReference>
<dbReference type="Gene3D" id="3.20.110.10">
    <property type="entry name" value="Glycoside hydrolase 38, N terminal domain"/>
    <property type="match status" value="1"/>
</dbReference>
<dbReference type="Gene3D" id="1.20.1270.50">
    <property type="entry name" value="Glycoside hydrolase family 38, central domain"/>
    <property type="match status" value="2"/>
</dbReference>
<dbReference type="Gene3D" id="2.60.40.1180">
    <property type="entry name" value="Golgi alpha-mannosidase II"/>
    <property type="match status" value="1"/>
</dbReference>
<dbReference type="Gene3D" id="2.70.98.30">
    <property type="entry name" value="Golgi alpha-mannosidase II, domain 4"/>
    <property type="match status" value="1"/>
</dbReference>
<dbReference type="InterPro" id="IPR011013">
    <property type="entry name" value="Gal_mutarotase_sf_dom"/>
</dbReference>
<dbReference type="InterPro" id="IPR041147">
    <property type="entry name" value="GH38_C"/>
</dbReference>
<dbReference type="InterPro" id="IPR011330">
    <property type="entry name" value="Glyco_hydro/deAcase_b/a-brl"/>
</dbReference>
<dbReference type="InterPro" id="IPR011682">
    <property type="entry name" value="Glyco_hydro_38_C"/>
</dbReference>
<dbReference type="InterPro" id="IPR015341">
    <property type="entry name" value="Glyco_hydro_38_cen"/>
</dbReference>
<dbReference type="InterPro" id="IPR037094">
    <property type="entry name" value="Glyco_hydro_38_cen_sf"/>
</dbReference>
<dbReference type="InterPro" id="IPR000602">
    <property type="entry name" value="Glyco_hydro_38_N"/>
</dbReference>
<dbReference type="InterPro" id="IPR027291">
    <property type="entry name" value="Glyco_hydro_38_N_sf"/>
</dbReference>
<dbReference type="InterPro" id="IPR028995">
    <property type="entry name" value="Glyco_hydro_57/38_cen_sf"/>
</dbReference>
<dbReference type="InterPro" id="IPR013780">
    <property type="entry name" value="Glyco_hydro_b"/>
</dbReference>
<dbReference type="InterPro" id="IPR050843">
    <property type="entry name" value="Glycosyl_Hydrlase_38"/>
</dbReference>
<dbReference type="InterPro" id="IPR048534">
    <property type="entry name" value="Man2a1-like_dom"/>
</dbReference>
<dbReference type="PANTHER" id="PTHR11607">
    <property type="entry name" value="ALPHA-MANNOSIDASE"/>
    <property type="match status" value="1"/>
</dbReference>
<dbReference type="PANTHER" id="PTHR11607:SF3">
    <property type="entry name" value="LYSOSOMAL ALPHA-MANNOSIDASE"/>
    <property type="match status" value="1"/>
</dbReference>
<dbReference type="Pfam" id="PF09261">
    <property type="entry name" value="Alpha-mann_mid"/>
    <property type="match status" value="1"/>
</dbReference>
<dbReference type="Pfam" id="PF17677">
    <property type="entry name" value="Glyco_hydro38C2"/>
    <property type="match status" value="1"/>
</dbReference>
<dbReference type="Pfam" id="PF07748">
    <property type="entry name" value="Glyco_hydro_38C"/>
    <property type="match status" value="1"/>
</dbReference>
<dbReference type="Pfam" id="PF01074">
    <property type="entry name" value="Glyco_hydro_38N"/>
    <property type="match status" value="1"/>
</dbReference>
<dbReference type="Pfam" id="PF21260">
    <property type="entry name" value="Laman-like_dom"/>
    <property type="match status" value="1"/>
</dbReference>
<dbReference type="SMART" id="SM00872">
    <property type="entry name" value="Alpha-mann_mid"/>
    <property type="match status" value="1"/>
</dbReference>
<dbReference type="SUPFAM" id="SSF88688">
    <property type="entry name" value="Families 57/38 glycoside transferase middle domain"/>
    <property type="match status" value="1"/>
</dbReference>
<dbReference type="SUPFAM" id="SSF74650">
    <property type="entry name" value="Galactose mutarotase-like"/>
    <property type="match status" value="1"/>
</dbReference>
<dbReference type="SUPFAM" id="SSF88713">
    <property type="entry name" value="Glycoside hydrolase/deacetylase"/>
    <property type="match status" value="1"/>
</dbReference>
<name>MANA2_ARATH</name>
<feature type="signal peptide" evidence="4">
    <location>
        <begin position="1"/>
        <end position="21"/>
    </location>
</feature>
<feature type="chain" id="PRO_5006749971" description="Probable alpha-mannosidase At5g13980" evidence="4">
    <location>
        <begin position="22"/>
        <end position="1024"/>
    </location>
</feature>
<feature type="binding site" evidence="3">
    <location>
        <position position="46"/>
    </location>
    <ligand>
        <name>Zn(2+)</name>
        <dbReference type="ChEBI" id="CHEBI:29105"/>
    </ligand>
</feature>
<feature type="binding site" evidence="3">
    <location>
        <position position="48"/>
    </location>
    <ligand>
        <name>Zn(2+)</name>
        <dbReference type="ChEBI" id="CHEBI:29105"/>
    </ligand>
</feature>
<feature type="binding site" evidence="3">
    <location>
        <position position="168"/>
    </location>
    <ligand>
        <name>Zn(2+)</name>
        <dbReference type="ChEBI" id="CHEBI:29105"/>
    </ligand>
</feature>
<feature type="binding site" evidence="3">
    <location>
        <position position="410"/>
    </location>
    <ligand>
        <name>Zn(2+)</name>
        <dbReference type="ChEBI" id="CHEBI:29105"/>
    </ligand>
</feature>
<feature type="glycosylation site" description="N-linked (GlcNAc...) asparagine" evidence="5">
    <location>
        <position position="27"/>
    </location>
</feature>
<feature type="glycosylation site" description="N-linked (GlcNAc...) asparagine" evidence="5">
    <location>
        <position position="63"/>
    </location>
</feature>
<feature type="glycosylation site" description="N-linked (GlcNAc...) asparagine" evidence="5">
    <location>
        <position position="278"/>
    </location>
</feature>
<feature type="glycosylation site" description="N-linked (GlcNAc...) asparagine" evidence="5">
    <location>
        <position position="465"/>
    </location>
</feature>
<feature type="glycosylation site" description="N-linked (GlcNAc...) asparagine" evidence="5">
    <location>
        <position position="475"/>
    </location>
</feature>
<feature type="glycosylation site" description="N-linked (GlcNAc...) asparagine" evidence="5">
    <location>
        <position position="637"/>
    </location>
</feature>
<feature type="glycosylation site" description="N-linked (GlcNAc...) asparagine" evidence="5">
    <location>
        <position position="658"/>
    </location>
</feature>
<feature type="glycosylation site" description="N-linked (GlcNAc...) asparagine" evidence="5">
    <location>
        <position position="733"/>
    </location>
</feature>
<feature type="glycosylation site" description="N-linked (GlcNAc...) asparagine" evidence="5">
    <location>
        <position position="823"/>
    </location>
</feature>
<feature type="disulfide bond" evidence="1">
    <location>
        <begin position="461"/>
        <end position="469"/>
    </location>
</feature>
<feature type="disulfide bond" evidence="1">
    <location>
        <begin position="827"/>
        <end position="832"/>
    </location>
</feature>
<proteinExistence type="evidence at transcript level"/>
<gene>
    <name evidence="7" type="ordered locus">At5g13980</name>
    <name evidence="8" type="ORF">MAC12.5</name>
</gene>
<evidence type="ECO:0000250" key="1">
    <source>
        <dbReference type="UniProtKB" id="C0HJB3"/>
    </source>
</evidence>
<evidence type="ECO:0000250" key="2">
    <source>
        <dbReference type="UniProtKB" id="P94078"/>
    </source>
</evidence>
<evidence type="ECO:0000250" key="3">
    <source>
        <dbReference type="UniProtKB" id="Q29451"/>
    </source>
</evidence>
<evidence type="ECO:0000255" key="4"/>
<evidence type="ECO:0000255" key="5">
    <source>
        <dbReference type="PROSITE-ProRule" id="PRU00498"/>
    </source>
</evidence>
<evidence type="ECO:0000305" key="6"/>
<evidence type="ECO:0000312" key="7">
    <source>
        <dbReference type="Araport" id="AT5G13980"/>
    </source>
</evidence>
<evidence type="ECO:0000312" key="8">
    <source>
        <dbReference type="EMBL" id="BAB11126.1"/>
    </source>
</evidence>
<keyword id="KW-0025">Alternative splicing</keyword>
<keyword id="KW-1015">Disulfide bond</keyword>
<keyword id="KW-0325">Glycoprotein</keyword>
<keyword id="KW-0326">Glycosidase</keyword>
<keyword id="KW-0378">Hydrolase</keyword>
<keyword id="KW-0479">Metal-binding</keyword>
<keyword id="KW-1185">Reference proteome</keyword>
<keyword id="KW-0732">Signal</keyword>
<keyword id="KW-0862">Zinc</keyword>
<sequence>MDLAKFLCWIVLLLGISLVESRYMVYNTSHTIVPGKLNVHVVPHSHDDVGWLKTVDQYYVGSNNSIQVACVQNVLDSIVPALLADKNRKFIYVEQAFFQRWWNEQSEEIKRIVKELIHSGQLELINGGMCMHDEAAPHYIDMIDQTTLGHRFIIREFNVTPRIGWQIDPFGHSAVQAYLLGAEVGFDSVFFGRIDYQDREKRYKEKTLEVIWRGSKSLGSSSQIFAGAFPTNYEPPPGGFYYEITDDSPVVQDDPDLFDYNVQERVNAFVAAALDQANITRINHIMFTMGTDFRYQYAHTWYRQMDKLIHYVNLDGRVNAFYSTPSIYTDAKHAANEAWPLKTEDYFPYADRINAYWTGYFTSRPALKRYVRVMSAYYLAARQLEFFKGRSQKGPNTDSLADALAIAQHHDAVSGTSKQHVANDYAKRLAIGYVEAESVVATSLAHLTKVDPTLNPTFQQCLLLNISYCPSSEVNLSDGKSLIVLAYNPLGWKRVDIVRLPVVGGDVSVHDSEGHEVESQLVPFTDEYVALRKYHVEAYLGQSPTQVPKYWLVFSVTVPPLGFTTYTISTAKKTDGYSSKSYVSNILKGEQSIINIGHGHLKLSFSTDQGTAINYVNGRTSMTEPVKQTFSYYSAYNGSNDKEPLIPQNSGAYVFRPNGTFPINPEGQVPLTVIHGPLVDEVHQQINPWISQITRVYKGKEHVEVEFIVGNIPIDDGIGKEVVTQISSSLKSNKTFYTDSSGRDYIKRIRDYRSDWKLDVNQPIAGNYYPINHGIYLQDSKKEFSVMVDRAFGGSSIVDGQVELMLHRRLLLDDSRGVAENLNETVCVQDKCTGLTIQGKYYYRIDPYGEGAKWRRTFGQEIYSPLLLAFAQQDDGKPMSFGAASFSGIDPSYSLPDNVALLTLQELDDGNVLLRLAHLYEVEEDKELSGVASVELKKLFPGKKIGKLTEMSLSANQERSTMEKKRLVWKVEGEGSYGEEKKAKRGREIDPRKLEMELYPMEIRTVLIHLELPSSHSRINRFDA</sequence>
<protein>
    <recommendedName>
        <fullName evidence="6">Probable alpha-mannosidase At5g13980</fullName>
        <ecNumber evidence="6">3.2.1.24</ecNumber>
    </recommendedName>
</protein>
<accession>Q8LPJ3</accession>
<accession>Q3E9H8</accession>
<accession>Q9FFX7</accession>
<organism>
    <name type="scientific">Arabidopsis thaliana</name>
    <name type="common">Mouse-ear cress</name>
    <dbReference type="NCBI Taxonomy" id="3702"/>
    <lineage>
        <taxon>Eukaryota</taxon>
        <taxon>Viridiplantae</taxon>
        <taxon>Streptophyta</taxon>
        <taxon>Embryophyta</taxon>
        <taxon>Tracheophyta</taxon>
        <taxon>Spermatophyta</taxon>
        <taxon>Magnoliopsida</taxon>
        <taxon>eudicotyledons</taxon>
        <taxon>Gunneridae</taxon>
        <taxon>Pentapetalae</taxon>
        <taxon>rosids</taxon>
        <taxon>malvids</taxon>
        <taxon>Brassicales</taxon>
        <taxon>Brassicaceae</taxon>
        <taxon>Camelineae</taxon>
        <taxon>Arabidopsis</taxon>
    </lineage>
</organism>